<keyword id="KW-0210">Decarboxylase</keyword>
<keyword id="KW-0325">Glycoprotein</keyword>
<keyword id="KW-0456">Lyase</keyword>
<keyword id="KW-0464">Manganese</keyword>
<keyword id="KW-0479">Metal-binding</keyword>
<keyword id="KW-1185">Reference proteome</keyword>
<keyword id="KW-0964">Secreted</keyword>
<keyword id="KW-0732">Signal</keyword>
<comment type="function">
    <text evidence="1">Converts oxalate to formate and CO(2) in an O(2)-dependent reaction. Can also catalyze minor side reactions: oxalate oxidation to produce H(2)O(2), and oxalate-dependent, H(2)O(2)-independent dye oxidations.</text>
</comment>
<comment type="catalytic activity">
    <reaction evidence="1">
        <text>oxalate + H(+) = formate + CO2</text>
        <dbReference type="Rhea" id="RHEA:16509"/>
        <dbReference type="ChEBI" id="CHEBI:15378"/>
        <dbReference type="ChEBI" id="CHEBI:15740"/>
        <dbReference type="ChEBI" id="CHEBI:16526"/>
        <dbReference type="ChEBI" id="CHEBI:30623"/>
        <dbReference type="EC" id="4.1.1.2"/>
    </reaction>
</comment>
<comment type="cofactor">
    <cofactor evidence="1">
        <name>Mn(2+)</name>
        <dbReference type="ChEBI" id="CHEBI:29035"/>
    </cofactor>
    <text evidence="1">Binds 2 manganese ions per subunit.</text>
</comment>
<comment type="subcellular location">
    <subcellularLocation>
        <location evidence="4">Secreted</location>
    </subcellularLocation>
</comment>
<gene>
    <name type="ORF">ARB_02208</name>
</gene>
<evidence type="ECO:0000250" key="1">
    <source>
        <dbReference type="UniProtKB" id="O34714"/>
    </source>
</evidence>
<evidence type="ECO:0000255" key="2"/>
<evidence type="ECO:0000255" key="3">
    <source>
        <dbReference type="PROSITE-ProRule" id="PRU00498"/>
    </source>
</evidence>
<evidence type="ECO:0000269" key="4">
    <source>
    </source>
</evidence>
<evidence type="ECO:0000312" key="5">
    <source>
        <dbReference type="Proteomes" id="UP000008866"/>
    </source>
</evidence>
<accession>D4B179</accession>
<proteinExistence type="evidence at protein level"/>
<name>OXDC_ARTBC</name>
<dbReference type="EC" id="4.1.1.2" evidence="1"/>
<dbReference type="EMBL" id="ABSU01000025">
    <property type="protein sequence ID" value="EFE31014.1"/>
    <property type="molecule type" value="Genomic_DNA"/>
</dbReference>
<dbReference type="RefSeq" id="XP_003011654.1">
    <property type="nucleotide sequence ID" value="XM_003011608.1"/>
</dbReference>
<dbReference type="SMR" id="D4B179"/>
<dbReference type="STRING" id="663331.D4B179"/>
<dbReference type="GeneID" id="9523425"/>
<dbReference type="KEGG" id="abe:ARB_02208"/>
<dbReference type="eggNOG" id="ENOG502RJG4">
    <property type="taxonomic scope" value="Eukaryota"/>
</dbReference>
<dbReference type="HOGENOM" id="CLU_030515_2_1_1"/>
<dbReference type="OMA" id="WVREQTI"/>
<dbReference type="Proteomes" id="UP000008866">
    <property type="component" value="Unassembled WGS sequence"/>
</dbReference>
<dbReference type="GO" id="GO:0005576">
    <property type="term" value="C:extracellular region"/>
    <property type="evidence" value="ECO:0007669"/>
    <property type="project" value="UniProtKB-SubCell"/>
</dbReference>
<dbReference type="GO" id="GO:0046872">
    <property type="term" value="F:metal ion binding"/>
    <property type="evidence" value="ECO:0007669"/>
    <property type="project" value="UniProtKB-KW"/>
</dbReference>
<dbReference type="GO" id="GO:0046564">
    <property type="term" value="F:oxalate decarboxylase activity"/>
    <property type="evidence" value="ECO:0007669"/>
    <property type="project" value="UniProtKB-EC"/>
</dbReference>
<dbReference type="GO" id="GO:0033609">
    <property type="term" value="P:oxalate metabolic process"/>
    <property type="evidence" value="ECO:0007669"/>
    <property type="project" value="InterPro"/>
</dbReference>
<dbReference type="CDD" id="cd20305">
    <property type="entry name" value="cupin_OxDC_C"/>
    <property type="match status" value="1"/>
</dbReference>
<dbReference type="Gene3D" id="2.60.120.10">
    <property type="entry name" value="Jelly Rolls"/>
    <property type="match status" value="2"/>
</dbReference>
<dbReference type="InterPro" id="IPR017774">
    <property type="entry name" value="Bicupin_oxalate_deCO2ase/Oxase"/>
</dbReference>
<dbReference type="InterPro" id="IPR006045">
    <property type="entry name" value="Cupin_1"/>
</dbReference>
<dbReference type="InterPro" id="IPR051610">
    <property type="entry name" value="GPI/OXD"/>
</dbReference>
<dbReference type="InterPro" id="IPR014710">
    <property type="entry name" value="RmlC-like_jellyroll"/>
</dbReference>
<dbReference type="InterPro" id="IPR011051">
    <property type="entry name" value="RmlC_Cupin_sf"/>
</dbReference>
<dbReference type="NCBIfam" id="TIGR03404">
    <property type="entry name" value="bicupin_oxalic"/>
    <property type="match status" value="1"/>
</dbReference>
<dbReference type="PANTHER" id="PTHR35848">
    <property type="entry name" value="OXALATE-BINDING PROTEIN"/>
    <property type="match status" value="1"/>
</dbReference>
<dbReference type="PANTHER" id="PTHR35848:SF9">
    <property type="entry name" value="SLL1358 PROTEIN"/>
    <property type="match status" value="1"/>
</dbReference>
<dbReference type="Pfam" id="PF00190">
    <property type="entry name" value="Cupin_1"/>
    <property type="match status" value="2"/>
</dbReference>
<dbReference type="SMART" id="SM00835">
    <property type="entry name" value="Cupin_1"/>
    <property type="match status" value="2"/>
</dbReference>
<dbReference type="SUPFAM" id="SSF51182">
    <property type="entry name" value="RmlC-like cupins"/>
    <property type="match status" value="1"/>
</dbReference>
<protein>
    <recommendedName>
        <fullName evidence="1">Oxalate decarboxylase ARB_02208</fullName>
        <ecNumber evidence="1">4.1.1.2</ecNumber>
    </recommendedName>
</protein>
<sequence>MKFGSALVAAVAAVAGVAAKDYGGVPGQPIQKSGKGAVFSGATNPQLDLQNPSNINGQPATDIGLVPNLKWSFSLSKTRMFHGGWIREQVISDLPASHDIAGAQVHLTKGGIRQMHWHRVAEWGYVYAGSILVFAVTEDGQYQIDKLTPGDIYYFPKGAAHSFQGIEDENEVLVAFDEGDFDKIGYLFPPYYSNINLQLSNAFNYRTTFQVAEWIAHTPQDVLAKNFNISTGGTFDKTKSNMLEIINSTTSTHNVTGPNGALMGNSSYTFHIRDAPEIQVPGGGGTIQIVDSKNFPISKTIACAIVRLKPGALRELHWHPTAEEWLYFHSGNARATVYVSGGLSRTFDFTAGDTGVFPDNAGHYIENVSEDEDLVYLELYKADRVADVSLSQWLALTPHDIAAAAINVPIDVIDKLKKDKQYIIQ</sequence>
<organism>
    <name type="scientific">Arthroderma benhamiae (strain ATCC MYA-4681 / CBS 112371)</name>
    <name type="common">Trichophyton mentagrophytes</name>
    <dbReference type="NCBI Taxonomy" id="663331"/>
    <lineage>
        <taxon>Eukaryota</taxon>
        <taxon>Fungi</taxon>
        <taxon>Dikarya</taxon>
        <taxon>Ascomycota</taxon>
        <taxon>Pezizomycotina</taxon>
        <taxon>Eurotiomycetes</taxon>
        <taxon>Eurotiomycetidae</taxon>
        <taxon>Onygenales</taxon>
        <taxon>Arthrodermataceae</taxon>
        <taxon>Trichophyton</taxon>
    </lineage>
</organism>
<reference key="1">
    <citation type="journal article" date="2011" name="Genome Biol.">
        <title>Comparative and functional genomics provide insights into the pathogenicity of dermatophytic fungi.</title>
        <authorList>
            <person name="Burmester A."/>
            <person name="Shelest E."/>
            <person name="Gloeckner G."/>
            <person name="Heddergott C."/>
            <person name="Schindler S."/>
            <person name="Staib P."/>
            <person name="Heidel A."/>
            <person name="Felder M."/>
            <person name="Petzold A."/>
            <person name="Szafranski K."/>
            <person name="Feuermann M."/>
            <person name="Pedruzzi I."/>
            <person name="Priebe S."/>
            <person name="Groth M."/>
            <person name="Winkler R."/>
            <person name="Li W."/>
            <person name="Kniemeyer O."/>
            <person name="Schroeckh V."/>
            <person name="Hertweck C."/>
            <person name="Hube B."/>
            <person name="White T.C."/>
            <person name="Platzer M."/>
            <person name="Guthke R."/>
            <person name="Heitman J."/>
            <person name="Woestemeyer J."/>
            <person name="Zipfel P.F."/>
            <person name="Monod M."/>
            <person name="Brakhage A.A."/>
        </authorList>
    </citation>
    <scope>NUCLEOTIDE SEQUENCE [LARGE SCALE GENOMIC DNA]</scope>
    <source>
        <strain evidence="5">ATCC MYA-4681 / CBS 112371</strain>
    </source>
</reference>
<reference key="2">
    <citation type="journal article" date="2011" name="Proteomics">
        <title>Identification of novel secreted proteases during extracellular proteolysis by dermatophytes at acidic pH.</title>
        <authorList>
            <person name="Sriranganadane D."/>
            <person name="Waridel P."/>
            <person name="Salamin K."/>
            <person name="Feuermann M."/>
            <person name="Mignon B."/>
            <person name="Staib P."/>
            <person name="Neuhaus J.M."/>
            <person name="Quadroni M."/>
            <person name="Monod M."/>
        </authorList>
    </citation>
    <scope>IDENTIFICATION BY MASS SPECTROMETRY</scope>
    <scope>SUBCELLULAR LOCATION</scope>
</reference>
<feature type="signal peptide" evidence="2">
    <location>
        <begin position="1"/>
        <end position="19"/>
    </location>
</feature>
<feature type="chain" id="PRO_0000434495" description="Oxalate decarboxylase ARB_02208" evidence="2">
    <location>
        <begin position="20"/>
        <end position="425"/>
    </location>
</feature>
<feature type="domain" description="Cupin type-1 1" evidence="2">
    <location>
        <begin position="73"/>
        <end position="236"/>
    </location>
</feature>
<feature type="domain" description="Cupin type-1 2" evidence="2">
    <location>
        <begin position="270"/>
        <end position="414"/>
    </location>
</feature>
<feature type="active site" description="Proton donor" evidence="1">
    <location>
        <position position="378"/>
    </location>
</feature>
<feature type="binding site" evidence="1">
    <location>
        <position position="116"/>
    </location>
    <ligand>
        <name>Mn(2+)</name>
        <dbReference type="ChEBI" id="CHEBI:29035"/>
        <label>1</label>
    </ligand>
</feature>
<feature type="binding site" evidence="1">
    <location>
        <position position="118"/>
    </location>
    <ligand>
        <name>Mn(2+)</name>
        <dbReference type="ChEBI" id="CHEBI:29035"/>
        <label>1</label>
    </ligand>
</feature>
<feature type="binding site" evidence="1">
    <location>
        <position position="122"/>
    </location>
    <ligand>
        <name>Mn(2+)</name>
        <dbReference type="ChEBI" id="CHEBI:29035"/>
        <label>1</label>
    </ligand>
</feature>
<feature type="binding site" evidence="1">
    <location>
        <position position="161"/>
    </location>
    <ligand>
        <name>Mn(2+)</name>
        <dbReference type="ChEBI" id="CHEBI:29035"/>
        <label>1</label>
    </ligand>
</feature>
<feature type="binding site" evidence="1">
    <location>
        <position position="317"/>
    </location>
    <ligand>
        <name>Mn(2+)</name>
        <dbReference type="ChEBI" id="CHEBI:29035"/>
        <label>2</label>
    </ligand>
</feature>
<feature type="binding site" evidence="1">
    <location>
        <position position="319"/>
    </location>
    <ligand>
        <name>Mn(2+)</name>
        <dbReference type="ChEBI" id="CHEBI:29035"/>
        <label>2</label>
    </ligand>
</feature>
<feature type="binding site" evidence="1">
    <location>
        <position position="324"/>
    </location>
    <ligand>
        <name>Mn(2+)</name>
        <dbReference type="ChEBI" id="CHEBI:29035"/>
        <label>2</label>
    </ligand>
</feature>
<feature type="binding site" evidence="1">
    <location>
        <position position="363"/>
    </location>
    <ligand>
        <name>Mn(2+)</name>
        <dbReference type="ChEBI" id="CHEBI:29035"/>
        <label>2</label>
    </ligand>
</feature>
<feature type="glycosylation site" description="N-linked (GlcNAc...) asparagine" evidence="3">
    <location>
        <position position="228"/>
    </location>
</feature>
<feature type="glycosylation site" description="N-linked (GlcNAc...) asparagine" evidence="3">
    <location>
        <position position="247"/>
    </location>
</feature>
<feature type="glycosylation site" description="N-linked (GlcNAc...) asparagine" evidence="3">
    <location>
        <position position="254"/>
    </location>
</feature>
<feature type="glycosylation site" description="N-linked (GlcNAc...) asparagine" evidence="3">
    <location>
        <position position="265"/>
    </location>
</feature>
<feature type="glycosylation site" description="N-linked (GlcNAc...) asparagine" evidence="3">
    <location>
        <position position="367"/>
    </location>
</feature>